<name>MTA_CHIHA</name>
<dbReference type="EMBL" id="Y12580">
    <property type="protein sequence ID" value="CAA73159.1"/>
    <property type="molecule type" value="mRNA"/>
</dbReference>
<dbReference type="SMR" id="P68506"/>
<dbReference type="GO" id="GO:0046872">
    <property type="term" value="F:metal ion binding"/>
    <property type="evidence" value="ECO:0007669"/>
    <property type="project" value="UniProtKB-KW"/>
</dbReference>
<dbReference type="FunFam" id="4.10.10.10:FF:000001">
    <property type="entry name" value="Metallothionein"/>
    <property type="match status" value="1"/>
</dbReference>
<dbReference type="Gene3D" id="4.10.10.10">
    <property type="entry name" value="Metallothionein Isoform II"/>
    <property type="match status" value="1"/>
</dbReference>
<dbReference type="InterPro" id="IPR017854">
    <property type="entry name" value="Metalthion_dom_sf"/>
</dbReference>
<dbReference type="InterPro" id="IPR023587">
    <property type="entry name" value="Metalthion_dom_sf_vert"/>
</dbReference>
<dbReference type="InterPro" id="IPR000006">
    <property type="entry name" value="Metalthion_vert"/>
</dbReference>
<dbReference type="InterPro" id="IPR018064">
    <property type="entry name" value="Metalthion_vert_metal_BS"/>
</dbReference>
<dbReference type="PANTHER" id="PTHR23299">
    <property type="entry name" value="METALLOTHIONEIN"/>
    <property type="match status" value="1"/>
</dbReference>
<dbReference type="PANTHER" id="PTHR23299:SF24">
    <property type="entry name" value="METALLOTHIONEIN-1X"/>
    <property type="match status" value="1"/>
</dbReference>
<dbReference type="Pfam" id="PF00131">
    <property type="entry name" value="Metallothio"/>
    <property type="match status" value="1"/>
</dbReference>
<dbReference type="PRINTS" id="PR00860">
    <property type="entry name" value="MTVERTEBRATE"/>
</dbReference>
<dbReference type="SUPFAM" id="SSF57868">
    <property type="entry name" value="Metallothionein"/>
    <property type="match status" value="1"/>
</dbReference>
<dbReference type="PROSITE" id="PS00203">
    <property type="entry name" value="METALLOTHIONEIN_VRT"/>
    <property type="match status" value="1"/>
</dbReference>
<evidence type="ECO:0000250" key="1"/>
<evidence type="ECO:0000250" key="2">
    <source>
        <dbReference type="UniProtKB" id="P02795"/>
    </source>
</evidence>
<evidence type="ECO:0000250" key="3">
    <source>
        <dbReference type="UniProtKB" id="P62339"/>
    </source>
</evidence>
<evidence type="ECO:0000305" key="4"/>
<sequence length="60" mass="6005">MDPCDCSKSGTCNCGGSCTCTNCSCKSCKKSCCPCCPSGCTKCASGCVCKGKTCDTSCCQ</sequence>
<comment type="function">
    <text evidence="1">Metallothioneins have a high content of cysteine residues that bind various heavy metals.</text>
</comment>
<comment type="domain">
    <text>Class I metallothioneins contain 2 metal-binding domains: four divalent ions are chelated within cluster A of the alpha domain and are coordinated via cysteinyl thiolate bridges to 11 cysteine ligands. Cluster B, the corresponding region within the beta domain, can ligate three divalent ions to 9 cysteines.</text>
</comment>
<comment type="similarity">
    <text evidence="4">Belongs to the metallothionein superfamily. Type 1 family.</text>
</comment>
<gene>
    <name type="primary">mta</name>
</gene>
<proteinExistence type="inferred from homology"/>
<protein>
    <recommendedName>
        <fullName>Metallothionein A</fullName>
        <shortName>MT-A</shortName>
        <shortName>MT-I</shortName>
    </recommendedName>
</protein>
<accession>P68506</accession>
<accession>O13258</accession>
<feature type="chain" id="PRO_0000197275" description="Metallothionein A">
    <location>
        <begin position="1"/>
        <end position="60"/>
    </location>
</feature>
<feature type="region of interest" description="Beta">
    <location>
        <begin position="1"/>
        <end position="28"/>
    </location>
</feature>
<feature type="region of interest" description="Alpha">
    <location>
        <begin position="29"/>
        <end position="60"/>
    </location>
</feature>
<feature type="binding site" evidence="2">
    <location>
        <position position="4"/>
    </location>
    <ligand>
        <name>a divalent metal cation</name>
        <dbReference type="ChEBI" id="CHEBI:60240"/>
        <label>1</label>
        <note>in cluster B</note>
    </ligand>
</feature>
<feature type="binding site" evidence="2">
    <location>
        <position position="6"/>
    </location>
    <ligand>
        <name>a divalent metal cation</name>
        <dbReference type="ChEBI" id="CHEBI:60240"/>
        <label>1</label>
        <note>in cluster B</note>
    </ligand>
</feature>
<feature type="binding site" evidence="2">
    <location>
        <position position="6"/>
    </location>
    <ligand>
        <name>a divalent metal cation</name>
        <dbReference type="ChEBI" id="CHEBI:60240"/>
        <label>2</label>
        <note>in cluster B</note>
    </ligand>
</feature>
<feature type="binding site" evidence="2">
    <location>
        <position position="12"/>
    </location>
    <ligand>
        <name>a divalent metal cation</name>
        <dbReference type="ChEBI" id="CHEBI:60240"/>
        <label>2</label>
        <note>in cluster B</note>
    </ligand>
</feature>
<feature type="binding site" evidence="2">
    <location>
        <position position="14"/>
    </location>
    <ligand>
        <name>a divalent metal cation</name>
        <dbReference type="ChEBI" id="CHEBI:60240"/>
        <label>2</label>
        <note>in cluster B</note>
    </ligand>
</feature>
<feature type="binding site" evidence="2">
    <location>
        <position position="14"/>
    </location>
    <ligand>
        <name>a divalent metal cation</name>
        <dbReference type="ChEBI" id="CHEBI:60240"/>
        <label>3</label>
        <note>in cluster B</note>
    </ligand>
</feature>
<feature type="binding site" evidence="2">
    <location>
        <position position="18"/>
    </location>
    <ligand>
        <name>a divalent metal cation</name>
        <dbReference type="ChEBI" id="CHEBI:60240"/>
        <label>3</label>
        <note>in cluster B</note>
    </ligand>
</feature>
<feature type="binding site" evidence="2">
    <location>
        <position position="20"/>
    </location>
    <ligand>
        <name>a divalent metal cation</name>
        <dbReference type="ChEBI" id="CHEBI:60240"/>
        <label>1</label>
        <note>in cluster B</note>
    </ligand>
</feature>
<feature type="binding site" evidence="2">
    <location>
        <position position="23"/>
    </location>
    <ligand>
        <name>a divalent metal cation</name>
        <dbReference type="ChEBI" id="CHEBI:60240"/>
        <label>1</label>
        <note>in cluster B</note>
    </ligand>
</feature>
<feature type="binding site" evidence="2">
    <location>
        <position position="23"/>
    </location>
    <ligand>
        <name>a divalent metal cation</name>
        <dbReference type="ChEBI" id="CHEBI:60240"/>
        <label>3</label>
        <note>in cluster B</note>
    </ligand>
</feature>
<feature type="binding site" evidence="2">
    <location>
        <position position="25"/>
    </location>
    <ligand>
        <name>a divalent metal cation</name>
        <dbReference type="ChEBI" id="CHEBI:60240"/>
        <label>2</label>
        <note>in cluster B</note>
    </ligand>
</feature>
<feature type="binding site" evidence="2">
    <location>
        <position position="28"/>
    </location>
    <ligand>
        <name>a divalent metal cation</name>
        <dbReference type="ChEBI" id="CHEBI:60240"/>
        <label>3</label>
        <note>in cluster B</note>
    </ligand>
</feature>
<feature type="binding site" evidence="2">
    <location>
        <position position="32"/>
    </location>
    <ligand>
        <name>a divalent metal cation</name>
        <dbReference type="ChEBI" id="CHEBI:60240"/>
        <label>4</label>
        <note>in cluster A</note>
    </ligand>
</feature>
<feature type="binding site" evidence="2">
    <location>
        <position position="33"/>
    </location>
    <ligand>
        <name>a divalent metal cation</name>
        <dbReference type="ChEBI" id="CHEBI:60240"/>
        <label>4</label>
        <note>in cluster A</note>
    </ligand>
</feature>
<feature type="binding site" evidence="2">
    <location>
        <position position="33"/>
    </location>
    <ligand>
        <name>a divalent metal cation</name>
        <dbReference type="ChEBI" id="CHEBI:60240"/>
        <label>5</label>
        <note>in cluster A</note>
    </ligand>
</feature>
<feature type="binding site" evidence="2">
    <location>
        <position position="35"/>
    </location>
    <ligand>
        <name>a divalent metal cation</name>
        <dbReference type="ChEBI" id="CHEBI:60240"/>
        <label>5</label>
        <note>in cluster A</note>
    </ligand>
</feature>
<feature type="binding site" evidence="2">
    <location>
        <position position="36"/>
    </location>
    <ligand>
        <name>a divalent metal cation</name>
        <dbReference type="ChEBI" id="CHEBI:60240"/>
        <label>5</label>
        <note>in cluster A</note>
    </ligand>
</feature>
<feature type="binding site" evidence="2">
    <location>
        <position position="36"/>
    </location>
    <ligand>
        <name>a divalent metal cation</name>
        <dbReference type="ChEBI" id="CHEBI:60240"/>
        <label>6</label>
        <note>in cluster A</note>
    </ligand>
</feature>
<feature type="binding site" evidence="2">
    <location>
        <position position="40"/>
    </location>
    <ligand>
        <name>a divalent metal cation</name>
        <dbReference type="ChEBI" id="CHEBI:60240"/>
        <label>6</label>
        <note>in cluster A</note>
    </ligand>
</feature>
<feature type="binding site" evidence="2">
    <location>
        <position position="43"/>
    </location>
    <ligand>
        <name>a divalent metal cation</name>
        <dbReference type="ChEBI" id="CHEBI:60240"/>
        <label>4</label>
        <note>in cluster A</note>
    </ligand>
</feature>
<feature type="binding site" evidence="2">
    <location>
        <position position="43"/>
    </location>
    <ligand>
        <name>a divalent metal cation</name>
        <dbReference type="ChEBI" id="CHEBI:60240"/>
        <label>6</label>
        <note>in cluster A</note>
    </ligand>
</feature>
<feature type="binding site" evidence="2">
    <location>
        <position position="47"/>
    </location>
    <ligand>
        <name>a divalent metal cation</name>
        <dbReference type="ChEBI" id="CHEBI:60240"/>
        <label>4</label>
        <note>in cluster A</note>
    </ligand>
</feature>
<feature type="binding site" evidence="2">
    <location>
        <position position="49"/>
    </location>
    <ligand>
        <name>a divalent metal cation</name>
        <dbReference type="ChEBI" id="CHEBI:60240"/>
        <label>5</label>
        <note>in cluster A</note>
    </ligand>
</feature>
<feature type="binding site" evidence="2">
    <location>
        <position position="49"/>
    </location>
    <ligand>
        <name>a divalent metal cation</name>
        <dbReference type="ChEBI" id="CHEBI:60240"/>
        <label>7</label>
        <note>in cluster A</note>
    </ligand>
</feature>
<feature type="binding site" evidence="3">
    <location>
        <position position="54"/>
    </location>
    <ligand>
        <name>a divalent metal cation</name>
        <dbReference type="ChEBI" id="CHEBI:60240"/>
        <label>7</label>
        <note>in cluster A</note>
    </ligand>
</feature>
<feature type="binding site" evidence="2">
    <location>
        <position position="58"/>
    </location>
    <ligand>
        <name>a divalent metal cation</name>
        <dbReference type="ChEBI" id="CHEBI:60240"/>
        <label>7</label>
        <note>in cluster A</note>
    </ligand>
</feature>
<feature type="binding site" evidence="2">
    <location>
        <position position="59"/>
    </location>
    <ligand>
        <name>a divalent metal cation</name>
        <dbReference type="ChEBI" id="CHEBI:60240"/>
        <label>6</label>
        <note>in cluster A</note>
    </ligand>
</feature>
<feature type="binding site" evidence="2">
    <location>
        <position position="59"/>
    </location>
    <ligand>
        <name>a divalent metal cation</name>
        <dbReference type="ChEBI" id="CHEBI:60240"/>
        <label>7</label>
        <note>in cluster A</note>
    </ligand>
</feature>
<reference key="1">
    <citation type="journal article" date="1998" name="Biochem. J.">
        <title>Cadmium-induced differential accumulation of metallothionein isoforms in the Antarctic icefish, which exhibits no basal metallothionein protein but high endogenous mRNA levels.</title>
        <authorList>
            <person name="Carginale V."/>
            <person name="Scudiero R."/>
            <person name="Capasso C."/>
            <person name="Capasso A."/>
            <person name="Kille P."/>
            <person name="di Prisco G."/>
            <person name="Parisi E."/>
        </authorList>
    </citation>
    <scope>NUCLEOTIDE SEQUENCE [MRNA]</scope>
    <source>
        <tissue>Liver</tissue>
    </source>
</reference>
<keyword id="KW-0479">Metal-binding</keyword>
<keyword id="KW-0480">Metal-thiolate cluster</keyword>
<keyword id="KW-0862">Zinc</keyword>
<organism>
    <name type="scientific">Chionodraco hamatus</name>
    <name type="common">Antarctic teleost icefish</name>
    <name type="synonym">Chaenichthys rhinoceratus hamatus</name>
    <dbReference type="NCBI Taxonomy" id="36188"/>
    <lineage>
        <taxon>Eukaryota</taxon>
        <taxon>Metazoa</taxon>
        <taxon>Chordata</taxon>
        <taxon>Craniata</taxon>
        <taxon>Vertebrata</taxon>
        <taxon>Euteleostomi</taxon>
        <taxon>Actinopterygii</taxon>
        <taxon>Neopterygii</taxon>
        <taxon>Teleostei</taxon>
        <taxon>Neoteleostei</taxon>
        <taxon>Acanthomorphata</taxon>
        <taxon>Eupercaria</taxon>
        <taxon>Perciformes</taxon>
        <taxon>Notothenioidei</taxon>
        <taxon>Channichthyidae</taxon>
        <taxon>Chionodraco</taxon>
    </lineage>
</organism>